<organism>
    <name type="scientific">Borrelia turicatae (strain 91E135)</name>
    <dbReference type="NCBI Taxonomy" id="314724"/>
    <lineage>
        <taxon>Bacteria</taxon>
        <taxon>Pseudomonadati</taxon>
        <taxon>Spirochaetota</taxon>
        <taxon>Spirochaetia</taxon>
        <taxon>Spirochaetales</taxon>
        <taxon>Borreliaceae</taxon>
        <taxon>Borrelia</taxon>
    </lineage>
</organism>
<evidence type="ECO:0000255" key="1">
    <source>
        <dbReference type="HAMAP-Rule" id="MF_01595"/>
    </source>
</evidence>
<evidence type="ECO:0000256" key="2">
    <source>
        <dbReference type="SAM" id="MobiDB-lite"/>
    </source>
</evidence>
<evidence type="ECO:0000305" key="3"/>
<comment type="function">
    <text evidence="1">Involved in mRNA degradation. Catalyzes the phosphorolysis of single-stranded polyribonucleotides processively in the 3'- to 5'-direction.</text>
</comment>
<comment type="catalytic activity">
    <reaction evidence="1">
        <text>RNA(n+1) + phosphate = RNA(n) + a ribonucleoside 5'-diphosphate</text>
        <dbReference type="Rhea" id="RHEA:22096"/>
        <dbReference type="Rhea" id="RHEA-COMP:14527"/>
        <dbReference type="Rhea" id="RHEA-COMP:17342"/>
        <dbReference type="ChEBI" id="CHEBI:43474"/>
        <dbReference type="ChEBI" id="CHEBI:57930"/>
        <dbReference type="ChEBI" id="CHEBI:140395"/>
        <dbReference type="EC" id="2.7.7.8"/>
    </reaction>
</comment>
<comment type="cofactor">
    <cofactor evidence="1">
        <name>Mg(2+)</name>
        <dbReference type="ChEBI" id="CHEBI:18420"/>
    </cofactor>
</comment>
<comment type="subcellular location">
    <subcellularLocation>
        <location evidence="1">Cytoplasm</location>
    </subcellularLocation>
</comment>
<comment type="similarity">
    <text evidence="1">Belongs to the polyribonucleotide nucleotidyltransferase family.</text>
</comment>
<comment type="sequence caution" evidence="3">
    <conflict type="erroneous initiation">
        <sequence resource="EMBL-CDS" id="AAX18121"/>
    </conflict>
</comment>
<name>PNP_BORT9</name>
<reference key="1">
    <citation type="submission" date="2004-12" db="EMBL/GenBank/DDBJ databases">
        <title>The genome sequence of Borrelia hermsii and Borrelia turicatae: comparative analysis of two agents of endemic N. America relapsing fever.</title>
        <authorList>
            <person name="Porcella S.F."/>
            <person name="Raffel S.J."/>
            <person name="Schrumpf M.E."/>
            <person name="Montgomery B."/>
            <person name="Smith T."/>
            <person name="Schwan T.G."/>
        </authorList>
    </citation>
    <scope>NUCLEOTIDE SEQUENCE [LARGE SCALE GENOMIC DNA]</scope>
    <source>
        <strain>91E135</strain>
    </source>
</reference>
<gene>
    <name evidence="1" type="primary">pnp</name>
    <name type="ordered locus">BT0805</name>
</gene>
<feature type="chain" id="PRO_0000381869" description="Polyribonucleotide nucleotidyltransferase">
    <location>
        <begin position="1"/>
        <end position="717"/>
    </location>
</feature>
<feature type="domain" description="KH" evidence="1">
    <location>
        <begin position="553"/>
        <end position="612"/>
    </location>
</feature>
<feature type="domain" description="S1 motif" evidence="1">
    <location>
        <begin position="622"/>
        <end position="715"/>
    </location>
</feature>
<feature type="region of interest" description="Disordered" evidence="2">
    <location>
        <begin position="650"/>
        <end position="683"/>
    </location>
</feature>
<feature type="compositionally biased region" description="Basic and acidic residues" evidence="2">
    <location>
        <begin position="654"/>
        <end position="665"/>
    </location>
</feature>
<feature type="compositionally biased region" description="Basic residues" evidence="2">
    <location>
        <begin position="666"/>
        <end position="675"/>
    </location>
</feature>
<feature type="binding site" evidence="1">
    <location>
        <position position="486"/>
    </location>
    <ligand>
        <name>Mg(2+)</name>
        <dbReference type="ChEBI" id="CHEBI:18420"/>
    </ligand>
</feature>
<feature type="binding site" evidence="1">
    <location>
        <position position="492"/>
    </location>
    <ligand>
        <name>Mg(2+)</name>
        <dbReference type="ChEBI" id="CHEBI:18420"/>
    </ligand>
</feature>
<accession>A1R0N0</accession>
<sequence>MRKILKLKVGREDLILETGLLAKQANGAVLATYGGSTVLATVCCSDSARENLDFVPLSVEYNEKYYAAGKIPGGFIKREGKPKDKEVLVSRLIDRPMRPLFDKRFGREIQVVPTTLSTDQMNPPDIVGMNAAFAAVFLSDIPFNGPIAAVRIAYLNSEFIVNPSFDEIQDSILDIVVAGSLDGITMVEGGANEVSEEVLLAAIDQAYEYIKQICNLQKEFILIVGEREKLPLAYEERVFEFKAELKDFIYSELKDACFVKGKLNRDKAIKLVKQKAYEHFSSVSQVDEENETLFYKALDDFEQEIVRRSILENNLRTDGRNPTQIRDIVAEVDLLRRTHGSALFTRGETQALAVTTLGTSIDEQIMDDIDGDKRLNFMLHYNFPPFSVGETGRLMTGRREIGHGHLAQRSLEAMLPKKDDFPYTIRVVSEILESNGSSSMATVCSGSMSLMAAGVPVKEQVAGIAMGLVSEGDKYVILSDILGEEDHLGDMDFKVAGTKNGITGFQMDIKISNVTKQLMKDALAQARIGRMHILSIMDSVISRSRDDISVNAPKIIQLQIDIDKISLVIGSTGKTVKAITDEFEVRVQIEQDGRITLFGTDSLKMQKAKARIESIVREPKIGEIYEGVVKKINSFGAFIELTPTKEGFLSNRPKSRDDRYGDMRHSRYGSGRHSRYGRDSRNTFAMRPPRLEEGQMVKVRISDIDKFGKIELELVRD</sequence>
<keyword id="KW-0963">Cytoplasm</keyword>
<keyword id="KW-0460">Magnesium</keyword>
<keyword id="KW-0479">Metal-binding</keyword>
<keyword id="KW-0548">Nucleotidyltransferase</keyword>
<keyword id="KW-1185">Reference proteome</keyword>
<keyword id="KW-0694">RNA-binding</keyword>
<keyword id="KW-0808">Transferase</keyword>
<protein>
    <recommendedName>
        <fullName evidence="1">Polyribonucleotide nucleotidyltransferase</fullName>
        <ecNumber evidence="1">2.7.7.8</ecNumber>
    </recommendedName>
    <alternativeName>
        <fullName evidence="1">Polynucleotide phosphorylase</fullName>
        <shortName evidence="1">PNPase</shortName>
    </alternativeName>
</protein>
<proteinExistence type="inferred from homology"/>
<dbReference type="EC" id="2.7.7.8" evidence="1"/>
<dbReference type="EMBL" id="CP000049">
    <property type="protein sequence ID" value="AAX18121.1"/>
    <property type="status" value="ALT_INIT"/>
    <property type="molecule type" value="Genomic_DNA"/>
</dbReference>
<dbReference type="RefSeq" id="WP_041178593.1">
    <property type="nucleotide sequence ID" value="NC_008710.1"/>
</dbReference>
<dbReference type="SMR" id="A1R0N0"/>
<dbReference type="KEGG" id="btu:BT0805"/>
<dbReference type="eggNOG" id="COG1185">
    <property type="taxonomic scope" value="Bacteria"/>
</dbReference>
<dbReference type="HOGENOM" id="CLU_004217_2_2_12"/>
<dbReference type="Proteomes" id="UP000001205">
    <property type="component" value="Chromosome"/>
</dbReference>
<dbReference type="GO" id="GO:0005829">
    <property type="term" value="C:cytosol"/>
    <property type="evidence" value="ECO:0007669"/>
    <property type="project" value="TreeGrafter"/>
</dbReference>
<dbReference type="GO" id="GO:0000175">
    <property type="term" value="F:3'-5'-RNA exonuclease activity"/>
    <property type="evidence" value="ECO:0007669"/>
    <property type="project" value="TreeGrafter"/>
</dbReference>
<dbReference type="GO" id="GO:0000287">
    <property type="term" value="F:magnesium ion binding"/>
    <property type="evidence" value="ECO:0007669"/>
    <property type="project" value="UniProtKB-UniRule"/>
</dbReference>
<dbReference type="GO" id="GO:0004654">
    <property type="term" value="F:polyribonucleotide nucleotidyltransferase activity"/>
    <property type="evidence" value="ECO:0007669"/>
    <property type="project" value="UniProtKB-UniRule"/>
</dbReference>
<dbReference type="GO" id="GO:0003723">
    <property type="term" value="F:RNA binding"/>
    <property type="evidence" value="ECO:0007669"/>
    <property type="project" value="UniProtKB-UniRule"/>
</dbReference>
<dbReference type="GO" id="GO:0006402">
    <property type="term" value="P:mRNA catabolic process"/>
    <property type="evidence" value="ECO:0007669"/>
    <property type="project" value="UniProtKB-UniRule"/>
</dbReference>
<dbReference type="GO" id="GO:0006396">
    <property type="term" value="P:RNA processing"/>
    <property type="evidence" value="ECO:0007669"/>
    <property type="project" value="InterPro"/>
</dbReference>
<dbReference type="CDD" id="cd02393">
    <property type="entry name" value="KH-I_PNPase"/>
    <property type="match status" value="1"/>
</dbReference>
<dbReference type="CDD" id="cd11363">
    <property type="entry name" value="RNase_PH_PNPase_1"/>
    <property type="match status" value="1"/>
</dbReference>
<dbReference type="CDD" id="cd11364">
    <property type="entry name" value="RNase_PH_PNPase_2"/>
    <property type="match status" value="1"/>
</dbReference>
<dbReference type="FunFam" id="3.30.1370.10:FF:000001">
    <property type="entry name" value="Polyribonucleotide nucleotidyltransferase"/>
    <property type="match status" value="1"/>
</dbReference>
<dbReference type="FunFam" id="3.30.230.70:FF:000001">
    <property type="entry name" value="Polyribonucleotide nucleotidyltransferase"/>
    <property type="match status" value="1"/>
</dbReference>
<dbReference type="FunFam" id="3.30.230.70:FF:000002">
    <property type="entry name" value="Polyribonucleotide nucleotidyltransferase"/>
    <property type="match status" value="1"/>
</dbReference>
<dbReference type="Gene3D" id="3.30.230.70">
    <property type="entry name" value="GHMP Kinase, N-terminal domain"/>
    <property type="match status" value="2"/>
</dbReference>
<dbReference type="Gene3D" id="3.30.1370.10">
    <property type="entry name" value="K Homology domain, type 1"/>
    <property type="match status" value="1"/>
</dbReference>
<dbReference type="Gene3D" id="2.40.50.140">
    <property type="entry name" value="Nucleic acid-binding proteins"/>
    <property type="match status" value="1"/>
</dbReference>
<dbReference type="HAMAP" id="MF_01595">
    <property type="entry name" value="PNPase"/>
    <property type="match status" value="1"/>
</dbReference>
<dbReference type="InterPro" id="IPR001247">
    <property type="entry name" value="ExoRNase_PH_dom1"/>
</dbReference>
<dbReference type="InterPro" id="IPR015847">
    <property type="entry name" value="ExoRNase_PH_dom2"/>
</dbReference>
<dbReference type="InterPro" id="IPR036345">
    <property type="entry name" value="ExoRNase_PH_dom2_sf"/>
</dbReference>
<dbReference type="InterPro" id="IPR004087">
    <property type="entry name" value="KH_dom"/>
</dbReference>
<dbReference type="InterPro" id="IPR004088">
    <property type="entry name" value="KH_dom_type_1"/>
</dbReference>
<dbReference type="InterPro" id="IPR036612">
    <property type="entry name" value="KH_dom_type_1_sf"/>
</dbReference>
<dbReference type="InterPro" id="IPR012340">
    <property type="entry name" value="NA-bd_OB-fold"/>
</dbReference>
<dbReference type="InterPro" id="IPR012162">
    <property type="entry name" value="PNPase"/>
</dbReference>
<dbReference type="InterPro" id="IPR027408">
    <property type="entry name" value="PNPase/RNase_PH_dom_sf"/>
</dbReference>
<dbReference type="InterPro" id="IPR015848">
    <property type="entry name" value="PNPase_PH_RNA-bd_bac/org-type"/>
</dbReference>
<dbReference type="InterPro" id="IPR020568">
    <property type="entry name" value="Ribosomal_Su5_D2-typ_SF"/>
</dbReference>
<dbReference type="InterPro" id="IPR003029">
    <property type="entry name" value="S1_domain"/>
</dbReference>
<dbReference type="NCBIfam" id="TIGR03591">
    <property type="entry name" value="polynuc_phos"/>
    <property type="match status" value="1"/>
</dbReference>
<dbReference type="NCBIfam" id="NF008805">
    <property type="entry name" value="PRK11824.1"/>
    <property type="match status" value="1"/>
</dbReference>
<dbReference type="PANTHER" id="PTHR11252">
    <property type="entry name" value="POLYRIBONUCLEOTIDE NUCLEOTIDYLTRANSFERASE"/>
    <property type="match status" value="1"/>
</dbReference>
<dbReference type="PANTHER" id="PTHR11252:SF0">
    <property type="entry name" value="POLYRIBONUCLEOTIDE NUCLEOTIDYLTRANSFERASE 1, MITOCHONDRIAL"/>
    <property type="match status" value="1"/>
</dbReference>
<dbReference type="Pfam" id="PF00013">
    <property type="entry name" value="KH_1"/>
    <property type="match status" value="1"/>
</dbReference>
<dbReference type="Pfam" id="PF03726">
    <property type="entry name" value="PNPase"/>
    <property type="match status" value="1"/>
</dbReference>
<dbReference type="Pfam" id="PF01138">
    <property type="entry name" value="RNase_PH"/>
    <property type="match status" value="2"/>
</dbReference>
<dbReference type="Pfam" id="PF03725">
    <property type="entry name" value="RNase_PH_C"/>
    <property type="match status" value="2"/>
</dbReference>
<dbReference type="Pfam" id="PF00575">
    <property type="entry name" value="S1"/>
    <property type="match status" value="1"/>
</dbReference>
<dbReference type="PIRSF" id="PIRSF005499">
    <property type="entry name" value="PNPase"/>
    <property type="match status" value="1"/>
</dbReference>
<dbReference type="SMART" id="SM00322">
    <property type="entry name" value="KH"/>
    <property type="match status" value="1"/>
</dbReference>
<dbReference type="SMART" id="SM00316">
    <property type="entry name" value="S1"/>
    <property type="match status" value="1"/>
</dbReference>
<dbReference type="SUPFAM" id="SSF54791">
    <property type="entry name" value="Eukaryotic type KH-domain (KH-domain type I)"/>
    <property type="match status" value="1"/>
</dbReference>
<dbReference type="SUPFAM" id="SSF50249">
    <property type="entry name" value="Nucleic acid-binding proteins"/>
    <property type="match status" value="1"/>
</dbReference>
<dbReference type="SUPFAM" id="SSF55666">
    <property type="entry name" value="Ribonuclease PH domain 2-like"/>
    <property type="match status" value="2"/>
</dbReference>
<dbReference type="SUPFAM" id="SSF54211">
    <property type="entry name" value="Ribosomal protein S5 domain 2-like"/>
    <property type="match status" value="2"/>
</dbReference>
<dbReference type="PROSITE" id="PS50084">
    <property type="entry name" value="KH_TYPE_1"/>
    <property type="match status" value="1"/>
</dbReference>
<dbReference type="PROSITE" id="PS50126">
    <property type="entry name" value="S1"/>
    <property type="match status" value="1"/>
</dbReference>